<gene>
    <name type="primary">MHP1</name>
    <name type="ordered locus">YJL042W</name>
    <name type="ORF">J1206</name>
</gene>
<sequence length="1398" mass="155207">MDSKDTQKLLKEHRIPCIDVGWLVRPSASTSKSSRPGKSESKANSVAPDIQMDTARPPVFETSVDSSSSILSSNDKGRRHSVAASLLMDNQRANAGSTSVPTNIPPPRGRSKSVVETNLSNVEADSGHHHHHRHHHHTEDAPAPKKVGFFKSLFGHRKKDQEQQEKERERKERSPSPTHVDRGAAIRRERTATISAESPPPLQYNAPPSYNDTVVPLTRSKTESEVYYENHPQSYYHGRMRTYHSPEEGKVDGTSPADDHNYGGSRPDPRLMDFLRYYKSKDYKLAAFKEGNFIKSSASPTTKKNRRASFSLHNDKPQPAKSLAHQKFDAKGRPIPPHPDAPKLPSAFRKKHPSNASIVDTVDSNSDVSSSAQNNNQTPSSHKFGAFLRKVTSYGNNNNNSTNASSLSANVNNPDTSSTSLWSSSSMEFDPSKITTVPGLENIRPLKHVSFATNTYFNDPPQQICSKNPRKGEVEVKPNGSVVIHRLTPQERKKIMESTSLGVVVGGTGQLKLLNPEEDDANAKSKEEMAPQKQNEVEAHDEEDNNSQRRNIVMAAAEAAAEARAKEAPNELKRIVTNNEEEVTVSKTASHLTIDKPMISRRGASTSSLASMVSSDTNGTNADDEGEILPPPSLKIPHDIVYTRCCHLREILPIPATLKQLKKGSTDPIPILQLRNPRPSMVEIWSFSDFLSIAPVLCLSLDGVQLTVQMLRIILSSLVYKQHFQKLSLRNTPLDEEGWKVLCYFVSKAKSLHSIDLTMVPSIKTNVQKPSKSSLKSKILRMQCNLENRSDMNWDLLTASIALMGGLEEIVISGAKMNSAQFKNFILVACIATERLGLAYNGLSKSQCDDLAKWMVQSKVTGLDVGFNDLNGKLSSFTDAVLGKIQKANEKNVFKFLSLNGTNLRVNEHDTFENNEVLKLISVLCYLENLKFLDISNNPAIFPHCVPTLIDFLPVFVNLVRLHIDYNNLSSTSVVMLAEILPMCSRLNYFSMLGTELDLASSKALAEAVRKSSSLMTLDVDYVYMPENIKEKISLYALRNIQGELKRVNSDDKDIKDSQFSSLQDQLSLLLTEKADNSEHYNKMVENFMAKIALARIKISKVVHDLFDLKLNGQLNLEGKEALIRLCFIEASLERGCDLLKQRHNNTLKSPEAVSKSRKGGNQAQPNSESCQRMLLSSSILQNSDHIALMPFGSAIVEKSSPDAEDAVEFREGDDSNVNHEDVPANDQQFRDEVDIKNKYSIIKRELEHEKLVGGGDLPVDKEILNRAAQSLDSDQIKEFLLKNDVSTILGVIDELHSQGYHLHHIFKKQGNQEETAFRTKDEQQSSQSNDSSANASPTTDPISTGSNTSRTNDNAHIPPTDAPGFDKFMNNAEENAIDAAYDDVLDKIQDARNSSTK</sequence>
<evidence type="ECO:0000256" key="1">
    <source>
        <dbReference type="SAM" id="MobiDB-lite"/>
    </source>
</evidence>
<evidence type="ECO:0000269" key="2">
    <source>
    </source>
</evidence>
<evidence type="ECO:0000305" key="3"/>
<evidence type="ECO:0000305" key="4">
    <source>
    </source>
</evidence>
<evidence type="ECO:0007744" key="5">
    <source>
    </source>
</evidence>
<evidence type="ECO:0007744" key="6">
    <source>
    </source>
</evidence>
<evidence type="ECO:0007744" key="7">
    <source>
    </source>
</evidence>
<evidence type="ECO:0007744" key="8">
    <source>
    </source>
</evidence>
<evidence type="ECO:0007744" key="9">
    <source>
    </source>
</evidence>
<evidence type="ECO:0007744" key="10">
    <source>
    </source>
</evidence>
<comment type="function">
    <text>Essential for the formation and/or stabilization of microtubules. Binds to microtubules in vitro.</text>
</comment>
<comment type="interaction">
    <interactant intactId="EBI-10880">
        <id>P43638</id>
    </interactant>
    <interactant intactId="EBI-13715">
        <id>P32598</id>
        <label>GLC7</label>
    </interactant>
    <organismsDiffer>false</organismsDiffer>
    <experiments>6</experiments>
</comment>
<comment type="subcellular location">
    <subcellularLocation>
        <location>Cytoplasm</location>
    </subcellularLocation>
    <subcellularLocation>
        <location>Cytoplasm</location>
        <location>Cytoskeleton</location>
        <location>Spindle</location>
    </subcellularLocation>
    <text>Cytoplasmic microtubules and mitotic spindles.</text>
</comment>
<comment type="miscellaneous">
    <text evidence="2">Present with 279 molecules/cell in log phase SD medium.</text>
</comment>
<protein>
    <recommendedName>
        <fullName>MAP-homologous protein 1</fullName>
    </recommendedName>
</protein>
<reference key="1">
    <citation type="journal article" date="1996" name="J. Cell Biol.">
        <title>MHP1, an essential gene in Saccharomyces cerevisiae required for microtubule function.</title>
        <authorList>
            <person name="Irminger-Finger I."/>
            <person name="Hurt E."/>
            <person name="Roebuck A."/>
            <person name="Collart M.A."/>
            <person name="Edelstein S.J."/>
        </authorList>
    </citation>
    <scope>NUCLEOTIDE SEQUENCE [GENOMIC DNA]</scope>
</reference>
<reference key="2">
    <citation type="journal article" date="1996" name="EMBO J.">
        <title>Complete nucleotide sequence of Saccharomyces cerevisiae chromosome X.</title>
        <authorList>
            <person name="Galibert F."/>
            <person name="Alexandraki D."/>
            <person name="Baur A."/>
            <person name="Boles E."/>
            <person name="Chalwatzis N."/>
            <person name="Chuat J.-C."/>
            <person name="Coster F."/>
            <person name="Cziepluch C."/>
            <person name="de Haan M."/>
            <person name="Domdey H."/>
            <person name="Durand P."/>
            <person name="Entian K.-D."/>
            <person name="Gatius M."/>
            <person name="Goffeau A."/>
            <person name="Grivell L.A."/>
            <person name="Hennemann A."/>
            <person name="Herbert C.J."/>
            <person name="Heumann K."/>
            <person name="Hilger F."/>
            <person name="Hollenberg C.P."/>
            <person name="Huang M.-E."/>
            <person name="Jacq C."/>
            <person name="Jauniaux J.-C."/>
            <person name="Katsoulou C."/>
            <person name="Kirchrath L."/>
            <person name="Kleine K."/>
            <person name="Kordes E."/>
            <person name="Koetter P."/>
            <person name="Liebl S."/>
            <person name="Louis E.J."/>
            <person name="Manus V."/>
            <person name="Mewes H.-W."/>
            <person name="Miosga T."/>
            <person name="Obermaier B."/>
            <person name="Perea J."/>
            <person name="Pohl T.M."/>
            <person name="Portetelle D."/>
            <person name="Pujol A."/>
            <person name="Purnelle B."/>
            <person name="Ramezani Rad M."/>
            <person name="Rasmussen S.W."/>
            <person name="Rose M."/>
            <person name="Rossau R."/>
            <person name="Schaaff-Gerstenschlaeger I."/>
            <person name="Smits P.H.M."/>
            <person name="Scarcez T."/>
            <person name="Soriano N."/>
            <person name="To Van D."/>
            <person name="Tzermia M."/>
            <person name="Van Broekhoven A."/>
            <person name="Vandenbol M."/>
            <person name="Wedler H."/>
            <person name="von Wettstein D."/>
            <person name="Wambutt R."/>
            <person name="Zagulski M."/>
            <person name="Zollner A."/>
            <person name="Karpfinger-Hartl L."/>
        </authorList>
    </citation>
    <scope>NUCLEOTIDE SEQUENCE [LARGE SCALE GENOMIC DNA]</scope>
    <source>
        <strain>ATCC 204508 / S288c</strain>
    </source>
</reference>
<reference key="3">
    <citation type="journal article" date="2014" name="G3 (Bethesda)">
        <title>The reference genome sequence of Saccharomyces cerevisiae: Then and now.</title>
        <authorList>
            <person name="Engel S.R."/>
            <person name="Dietrich F.S."/>
            <person name="Fisk D.G."/>
            <person name="Binkley G."/>
            <person name="Balakrishnan R."/>
            <person name="Costanzo M.C."/>
            <person name="Dwight S.S."/>
            <person name="Hitz B.C."/>
            <person name="Karra K."/>
            <person name="Nash R.S."/>
            <person name="Weng S."/>
            <person name="Wong E.D."/>
            <person name="Lloyd P."/>
            <person name="Skrzypek M.S."/>
            <person name="Miyasato S.R."/>
            <person name="Simison M."/>
            <person name="Cherry J.M."/>
        </authorList>
    </citation>
    <scope>GENOME REANNOTATION</scope>
    <source>
        <strain>ATCC 204508 / S288c</strain>
    </source>
</reference>
<reference key="4">
    <citation type="journal article" date="2003" name="Nature">
        <title>Global analysis of protein expression in yeast.</title>
        <authorList>
            <person name="Ghaemmaghami S."/>
            <person name="Huh W.-K."/>
            <person name="Bower K."/>
            <person name="Howson R.W."/>
            <person name="Belle A."/>
            <person name="Dephoure N."/>
            <person name="O'Shea E.K."/>
            <person name="Weissman J.S."/>
        </authorList>
    </citation>
    <scope>LEVEL OF PROTEIN EXPRESSION [LARGE SCALE ANALYSIS]</scope>
</reference>
<reference key="5">
    <citation type="journal article" date="2007" name="J. Proteome Res.">
        <title>Large-scale phosphorylation analysis of alpha-factor-arrested Saccharomyces cerevisiae.</title>
        <authorList>
            <person name="Li X."/>
            <person name="Gerber S.A."/>
            <person name="Rudner A.D."/>
            <person name="Beausoleil S.A."/>
            <person name="Haas W."/>
            <person name="Villen J."/>
            <person name="Elias J.E."/>
            <person name="Gygi S.P."/>
        </authorList>
    </citation>
    <scope>PHOSPHORYLATION [LARGE SCALE ANALYSIS] AT THR-222 AND THR-577</scope>
    <scope>IDENTIFICATION BY MASS SPECTROMETRY [LARGE SCALE ANALYSIS]</scope>
    <source>
        <strain>ADR376</strain>
    </source>
</reference>
<reference key="6">
    <citation type="journal article" date="2007" name="Proc. Natl. Acad. Sci. U.S.A.">
        <title>Analysis of phosphorylation sites on proteins from Saccharomyces cerevisiae by electron transfer dissociation (ETD) mass spectrometry.</title>
        <authorList>
            <person name="Chi A."/>
            <person name="Huttenhower C."/>
            <person name="Geer L.Y."/>
            <person name="Coon J.J."/>
            <person name="Syka J.E.P."/>
            <person name="Bai D.L."/>
            <person name="Shabanowitz J."/>
            <person name="Burke D.J."/>
            <person name="Troyanskaya O.G."/>
            <person name="Hunt D.F."/>
        </authorList>
    </citation>
    <scope>PHOSPHORYLATION [LARGE SCALE ANALYSIS] AT SER-309 AND SER-311</scope>
    <scope>IDENTIFICATION BY MASS SPECTROMETRY [LARGE SCALE ANALYSIS]</scope>
</reference>
<reference key="7">
    <citation type="journal article" date="2008" name="Mol. Cell. Proteomics">
        <title>A multidimensional chromatography technology for in-depth phosphoproteome analysis.</title>
        <authorList>
            <person name="Albuquerque C.P."/>
            <person name="Smolka M.B."/>
            <person name="Payne S.H."/>
            <person name="Bafna V."/>
            <person name="Eng J."/>
            <person name="Zhou H."/>
        </authorList>
    </citation>
    <scope>PHOSPHORYLATION [LARGE SCALE ANALYSIS] AT THR-577</scope>
    <scope>IDENTIFICATION BY MASS SPECTROMETRY [LARGE SCALE ANALYSIS]</scope>
</reference>
<reference key="8">
    <citation type="journal article" date="2009" name="Science">
        <title>Global analysis of Cdk1 substrate phosphorylation sites provides insights into evolution.</title>
        <authorList>
            <person name="Holt L.J."/>
            <person name="Tuch B.B."/>
            <person name="Villen J."/>
            <person name="Johnson A.D."/>
            <person name="Gygi S.P."/>
            <person name="Morgan D.O."/>
        </authorList>
    </citation>
    <scope>PHOSPHORYLATION [LARGE SCALE ANALYSIS] AT SER-81; SER-311; SER-354; SER-357 AND THR-577</scope>
    <scope>IDENTIFICATION BY MASS SPECTROMETRY [LARGE SCALE ANALYSIS]</scope>
</reference>
<reference key="9">
    <citation type="journal article" date="2012" name="Proc. Natl. Acad. Sci. U.S.A.">
        <title>N-terminal acetylome analyses and functional insights of the N-terminal acetyltransferase NatB.</title>
        <authorList>
            <person name="Van Damme P."/>
            <person name="Lasa M."/>
            <person name="Polevoda B."/>
            <person name="Gazquez C."/>
            <person name="Elosegui-Artola A."/>
            <person name="Kim D.S."/>
            <person name="De Juan-Pardo E."/>
            <person name="Demeyer K."/>
            <person name="Hole K."/>
            <person name="Larrea E."/>
            <person name="Timmerman E."/>
            <person name="Prieto J."/>
            <person name="Arnesen T."/>
            <person name="Sherman F."/>
            <person name="Gevaert K."/>
            <person name="Aldabe R."/>
        </authorList>
    </citation>
    <scope>ACETYLATION [LARGE SCALE ANALYSIS] AT MET-1</scope>
    <scope>IDENTIFICATION BY MASS SPECTROMETRY [LARGE SCALE ANALYSIS]</scope>
</reference>
<reference key="10">
    <citation type="journal article" date="2012" name="Proteomics">
        <title>Sites of ubiquitin attachment in Saccharomyces cerevisiae.</title>
        <authorList>
            <person name="Starita L.M."/>
            <person name="Lo R.S."/>
            <person name="Eng J.K."/>
            <person name="von Haller P.D."/>
            <person name="Fields S."/>
        </authorList>
    </citation>
    <scope>UBIQUITINATION [LARGE SCALE ANALYSIS] AT LYS-221</scope>
    <scope>IDENTIFICATION BY MASS SPECTROMETRY [LARGE SCALE ANALYSIS]</scope>
</reference>
<dbReference type="EMBL" id="X84652">
    <property type="protein sequence ID" value="CAA59145.1"/>
    <property type="molecule type" value="Genomic_DNA"/>
</dbReference>
<dbReference type="EMBL" id="Z49317">
    <property type="protein sequence ID" value="CAA89333.1"/>
    <property type="molecule type" value="Genomic_DNA"/>
</dbReference>
<dbReference type="EMBL" id="BK006943">
    <property type="protein sequence ID" value="DAA08758.1"/>
    <property type="molecule type" value="Genomic_DNA"/>
</dbReference>
<dbReference type="PIR" id="S56814">
    <property type="entry name" value="S56814"/>
</dbReference>
<dbReference type="RefSeq" id="NP_012493.1">
    <property type="nucleotide sequence ID" value="NM_001181475.1"/>
</dbReference>
<dbReference type="SMR" id="P43638"/>
<dbReference type="BioGRID" id="33716">
    <property type="interactions" value="138"/>
</dbReference>
<dbReference type="DIP" id="DIP-1260N"/>
<dbReference type="FunCoup" id="P43638">
    <property type="interactions" value="175"/>
</dbReference>
<dbReference type="IntAct" id="P43638">
    <property type="interactions" value="16"/>
</dbReference>
<dbReference type="MINT" id="P43638"/>
<dbReference type="STRING" id="4932.YJL042W"/>
<dbReference type="GlyGen" id="P43638">
    <property type="glycosylation" value="1 site"/>
</dbReference>
<dbReference type="iPTMnet" id="P43638"/>
<dbReference type="PaxDb" id="4932-YJL042W"/>
<dbReference type="PeptideAtlas" id="P43638"/>
<dbReference type="EnsemblFungi" id="YJL042W_mRNA">
    <property type="protein sequence ID" value="YJL042W"/>
    <property type="gene ID" value="YJL042W"/>
</dbReference>
<dbReference type="GeneID" id="853408"/>
<dbReference type="KEGG" id="sce:YJL042W"/>
<dbReference type="AGR" id="SGD:S000003578"/>
<dbReference type="SGD" id="S000003578">
    <property type="gene designation" value="MHP1"/>
</dbReference>
<dbReference type="VEuPathDB" id="FungiDB:YJL042W"/>
<dbReference type="eggNOG" id="ENOG502QYHN">
    <property type="taxonomic scope" value="Eukaryota"/>
</dbReference>
<dbReference type="HOGENOM" id="CLU_004492_1_0_1"/>
<dbReference type="InParanoid" id="P43638"/>
<dbReference type="OMA" id="TNTYFND"/>
<dbReference type="OrthoDB" id="8436363at2759"/>
<dbReference type="BioCyc" id="YEAST:G3O-31507-MONOMER"/>
<dbReference type="BioGRID-ORCS" id="853408">
    <property type="hits" value="7 hits in 10 CRISPR screens"/>
</dbReference>
<dbReference type="PRO" id="PR:P43638"/>
<dbReference type="Proteomes" id="UP000002311">
    <property type="component" value="Chromosome X"/>
</dbReference>
<dbReference type="RNAct" id="P43638">
    <property type="molecule type" value="protein"/>
</dbReference>
<dbReference type="GO" id="GO:0005737">
    <property type="term" value="C:cytoplasm"/>
    <property type="evidence" value="ECO:0007669"/>
    <property type="project" value="UniProtKB-SubCell"/>
</dbReference>
<dbReference type="GO" id="GO:0005874">
    <property type="term" value="C:microtubule"/>
    <property type="evidence" value="ECO:0000314"/>
    <property type="project" value="SGD"/>
</dbReference>
<dbReference type="GO" id="GO:0005819">
    <property type="term" value="C:spindle"/>
    <property type="evidence" value="ECO:0007669"/>
    <property type="project" value="UniProtKB-SubCell"/>
</dbReference>
<dbReference type="GO" id="GO:0005200">
    <property type="term" value="F:structural constituent of cytoskeleton"/>
    <property type="evidence" value="ECO:0000314"/>
    <property type="project" value="SGD"/>
</dbReference>
<dbReference type="GO" id="GO:0031505">
    <property type="term" value="P:fungal-type cell wall organization"/>
    <property type="evidence" value="ECO:0000315"/>
    <property type="project" value="SGD"/>
</dbReference>
<dbReference type="GO" id="GO:0007026">
    <property type="term" value="P:negative regulation of microtubule depolymerization"/>
    <property type="evidence" value="ECO:0000315"/>
    <property type="project" value="SGD"/>
</dbReference>
<dbReference type="Gene3D" id="3.80.10.10">
    <property type="entry name" value="Ribonuclease Inhibitor"/>
    <property type="match status" value="1"/>
</dbReference>
<dbReference type="InterPro" id="IPR052410">
    <property type="entry name" value="DRC5"/>
</dbReference>
<dbReference type="InterPro" id="IPR032675">
    <property type="entry name" value="LRR_dom_sf"/>
</dbReference>
<dbReference type="PANTHER" id="PTHR24107:SF2">
    <property type="entry name" value="NLR FAMILY CARD DOMAIN CONTAINING 3"/>
    <property type="match status" value="1"/>
</dbReference>
<dbReference type="PANTHER" id="PTHR24107">
    <property type="entry name" value="YNEIN REGULATORY COMPLEX SUBUNIT 5"/>
    <property type="match status" value="1"/>
</dbReference>
<dbReference type="SUPFAM" id="SSF52047">
    <property type="entry name" value="RNI-like"/>
    <property type="match status" value="1"/>
</dbReference>
<accession>P43638</accession>
<accession>D6VWE2</accession>
<proteinExistence type="evidence at protein level"/>
<feature type="chain" id="PRO_0000072754" description="MAP-homologous protein 1">
    <location>
        <begin position="1"/>
        <end position="1398"/>
    </location>
</feature>
<feature type="region of interest" description="Disordered" evidence="1">
    <location>
        <begin position="21"/>
        <end position="77"/>
    </location>
</feature>
<feature type="region of interest" description="Disordered" evidence="1">
    <location>
        <begin position="90"/>
        <end position="144"/>
    </location>
</feature>
<feature type="region of interest" description="Disordered" evidence="1">
    <location>
        <begin position="156"/>
        <end position="186"/>
    </location>
</feature>
<feature type="region of interest" description="Disordered" evidence="1">
    <location>
        <begin position="191"/>
        <end position="210"/>
    </location>
</feature>
<feature type="region of interest" description="Disordered" evidence="1">
    <location>
        <begin position="244"/>
        <end position="270"/>
    </location>
</feature>
<feature type="region of interest" description="Disordered" evidence="1">
    <location>
        <begin position="296"/>
        <end position="382"/>
    </location>
</feature>
<feature type="region of interest" description="Disordered" evidence="1">
    <location>
        <begin position="395"/>
        <end position="428"/>
    </location>
</feature>
<feature type="region of interest" description="Disordered" evidence="1">
    <location>
        <begin position="515"/>
        <end position="548"/>
    </location>
</feature>
<feature type="region of interest" description="Disordered" evidence="1">
    <location>
        <begin position="605"/>
        <end position="630"/>
    </location>
</feature>
<feature type="region of interest" description="Disordered" evidence="1">
    <location>
        <begin position="1148"/>
        <end position="1169"/>
    </location>
</feature>
<feature type="region of interest" description="Disordered" evidence="1">
    <location>
        <begin position="1203"/>
        <end position="1223"/>
    </location>
</feature>
<feature type="region of interest" description="Tau/MAP repeat-like" evidence="4">
    <location>
        <begin position="1227"/>
        <end position="1258"/>
    </location>
</feature>
<feature type="region of interest" description="Disordered" evidence="1">
    <location>
        <begin position="1313"/>
        <end position="1372"/>
    </location>
</feature>
<feature type="compositionally biased region" description="Polar residues" evidence="1">
    <location>
        <begin position="27"/>
        <end position="36"/>
    </location>
</feature>
<feature type="compositionally biased region" description="Low complexity" evidence="1">
    <location>
        <begin position="63"/>
        <end position="73"/>
    </location>
</feature>
<feature type="compositionally biased region" description="Polar residues" evidence="1">
    <location>
        <begin position="91"/>
        <end position="102"/>
    </location>
</feature>
<feature type="compositionally biased region" description="Polar residues" evidence="1">
    <location>
        <begin position="114"/>
        <end position="123"/>
    </location>
</feature>
<feature type="compositionally biased region" description="Basic and acidic residues" evidence="1">
    <location>
        <begin position="159"/>
        <end position="186"/>
    </location>
</feature>
<feature type="compositionally biased region" description="Low complexity" evidence="1">
    <location>
        <begin position="357"/>
        <end position="371"/>
    </location>
</feature>
<feature type="compositionally biased region" description="Polar residues" evidence="1">
    <location>
        <begin position="372"/>
        <end position="381"/>
    </location>
</feature>
<feature type="compositionally biased region" description="Low complexity" evidence="1">
    <location>
        <begin position="396"/>
        <end position="426"/>
    </location>
</feature>
<feature type="compositionally biased region" description="Basic and acidic residues" evidence="1">
    <location>
        <begin position="521"/>
        <end position="538"/>
    </location>
</feature>
<feature type="compositionally biased region" description="Low complexity" evidence="1">
    <location>
        <begin position="605"/>
        <end position="615"/>
    </location>
</feature>
<feature type="compositionally biased region" description="Polar residues" evidence="1">
    <location>
        <begin position="1160"/>
        <end position="1169"/>
    </location>
</feature>
<feature type="compositionally biased region" description="Basic and acidic residues" evidence="1">
    <location>
        <begin position="1208"/>
        <end position="1223"/>
    </location>
</feature>
<feature type="compositionally biased region" description="Low complexity" evidence="1">
    <location>
        <begin position="1325"/>
        <end position="1337"/>
    </location>
</feature>
<feature type="compositionally biased region" description="Polar residues" evidence="1">
    <location>
        <begin position="1338"/>
        <end position="1355"/>
    </location>
</feature>
<feature type="modified residue" description="N-acetylmethionine" evidence="10">
    <location>
        <position position="1"/>
    </location>
</feature>
<feature type="modified residue" description="Phosphoserine" evidence="8">
    <location>
        <position position="81"/>
    </location>
</feature>
<feature type="modified residue" description="Phosphothreonine" evidence="6">
    <location>
        <position position="222"/>
    </location>
</feature>
<feature type="modified residue" description="Phosphoserine" evidence="5">
    <location>
        <position position="309"/>
    </location>
</feature>
<feature type="modified residue" description="Phosphoserine" evidence="5 8">
    <location>
        <position position="311"/>
    </location>
</feature>
<feature type="modified residue" description="Phosphoserine" evidence="8">
    <location>
        <position position="354"/>
    </location>
</feature>
<feature type="modified residue" description="Phosphoserine" evidence="8">
    <location>
        <position position="357"/>
    </location>
</feature>
<feature type="modified residue" description="Phosphothreonine" evidence="6 7 8">
    <location>
        <position position="577"/>
    </location>
</feature>
<feature type="cross-link" description="Glycyl lysine isopeptide (Lys-Gly) (interchain with G-Cter in ubiquitin)" evidence="9">
    <location>
        <position position="221"/>
    </location>
</feature>
<feature type="sequence conflict" description="In Ref. 1; CAA59145." evidence="3" ref="1">
    <original>R</original>
    <variation>RV</variation>
    <location>
        <position position="108"/>
    </location>
</feature>
<feature type="sequence conflict" description="In Ref. 1; CAA59145." evidence="3" ref="1">
    <original>KSVVETNLSNVEADSGHHHHHRHHHHTEDAPAPKKVGFFKSLFGHRKKDQEQQEKERERKERSPSPTHVDRGA</original>
    <variation>QWWRLTCLTLRLTPDIITTTATTITRKMLLHLRRSDSLRVCLAIGRRIRNNRRRNEKGKSAHPLRLTWTVAR</variation>
    <location>
        <begin position="112"/>
        <end position="184"/>
    </location>
</feature>
<feature type="sequence conflict" description="In Ref. 1; CAA59145." evidence="3" ref="1">
    <original>K</original>
    <variation>N</variation>
    <location>
        <position position="331"/>
    </location>
</feature>
<feature type="sequence conflict" description="In Ref. 1; CAA59145." evidence="3" ref="1">
    <original>T</original>
    <variation>Q</variation>
    <location>
        <position position="419"/>
    </location>
</feature>
<feature type="sequence conflict" description="In Ref. 1; CAA59145." evidence="3" ref="1">
    <original>ID</original>
    <variation>MH</variation>
    <location>
        <begin position="594"/>
        <end position="595"/>
    </location>
</feature>
<feature type="sequence conflict" description="In Ref. 1; CAA59145." evidence="3" ref="1">
    <original>G</original>
    <variation>A</variation>
    <location>
        <position position="619"/>
    </location>
</feature>
<feature type="sequence conflict" description="In Ref. 1; CAA59145." evidence="3" ref="1">
    <original>KQ</original>
    <variation>NE</variation>
    <location>
        <begin position="659"/>
        <end position="660"/>
    </location>
</feature>
<feature type="sequence conflict" description="In Ref. 1; CAA59145." evidence="3" ref="1">
    <original>LL</original>
    <variation>FI</variation>
    <location>
        <begin position="1175"/>
        <end position="1176"/>
    </location>
</feature>
<feature type="sequence conflict" description="In Ref. 1; CAA59145." evidence="3" ref="1">
    <original>KQGNQEETAFRT</original>
    <variation>NRETKKRPRSEP</variation>
    <location>
        <begin position="1309"/>
        <end position="1320"/>
    </location>
</feature>
<feature type="sequence conflict" description="In Ref. 1; CAA59145." evidence="3" ref="1">
    <original>T</original>
    <variation>S</variation>
    <location>
        <position position="1339"/>
    </location>
</feature>
<feature type="sequence conflict" description="In Ref. 1; CAA59145." evidence="3" ref="1">
    <original>A</original>
    <variation>H</variation>
    <location>
        <position position="1356"/>
    </location>
</feature>
<keyword id="KW-0007">Acetylation</keyword>
<keyword id="KW-0963">Cytoplasm</keyword>
<keyword id="KW-0206">Cytoskeleton</keyword>
<keyword id="KW-1017">Isopeptide bond</keyword>
<keyword id="KW-0493">Microtubule</keyword>
<keyword id="KW-0597">Phosphoprotein</keyword>
<keyword id="KW-1185">Reference proteome</keyword>
<keyword id="KW-0832">Ubl conjugation</keyword>
<organism>
    <name type="scientific">Saccharomyces cerevisiae (strain ATCC 204508 / S288c)</name>
    <name type="common">Baker's yeast</name>
    <dbReference type="NCBI Taxonomy" id="559292"/>
    <lineage>
        <taxon>Eukaryota</taxon>
        <taxon>Fungi</taxon>
        <taxon>Dikarya</taxon>
        <taxon>Ascomycota</taxon>
        <taxon>Saccharomycotina</taxon>
        <taxon>Saccharomycetes</taxon>
        <taxon>Saccharomycetales</taxon>
        <taxon>Saccharomycetaceae</taxon>
        <taxon>Saccharomyces</taxon>
    </lineage>
</organism>
<name>MHP1_YEAST</name>